<name>RL33_ACIC1</name>
<evidence type="ECO:0000255" key="1">
    <source>
        <dbReference type="HAMAP-Rule" id="MF_00294"/>
    </source>
</evidence>
<evidence type="ECO:0000305" key="2"/>
<comment type="similarity">
    <text evidence="1">Belongs to the bacterial ribosomal protein bL33 family.</text>
</comment>
<reference key="1">
    <citation type="journal article" date="2009" name="Genome Res.">
        <title>Complete genome of the cellulolytic thermophile Acidothermus cellulolyticus 11B provides insights into its ecophysiological and evolutionary adaptations.</title>
        <authorList>
            <person name="Barabote R.D."/>
            <person name="Xie G."/>
            <person name="Leu D.H."/>
            <person name="Normand P."/>
            <person name="Necsulea A."/>
            <person name="Daubin V."/>
            <person name="Medigue C."/>
            <person name="Adney W.S."/>
            <person name="Xu X.C."/>
            <person name="Lapidus A."/>
            <person name="Parales R.E."/>
            <person name="Detter C."/>
            <person name="Pujic P."/>
            <person name="Bruce D."/>
            <person name="Lavire C."/>
            <person name="Challacombe J.F."/>
            <person name="Brettin T.S."/>
            <person name="Berry A.M."/>
        </authorList>
    </citation>
    <scope>NUCLEOTIDE SEQUENCE [LARGE SCALE GENOMIC DNA]</scope>
    <source>
        <strain>ATCC 43068 / DSM 8971 / 11B</strain>
    </source>
</reference>
<protein>
    <recommendedName>
        <fullName evidence="1">Large ribosomal subunit protein bL33</fullName>
    </recommendedName>
    <alternativeName>
        <fullName evidence="2">50S ribosomal protein L33</fullName>
    </alternativeName>
</protein>
<accession>A0LRK1</accession>
<dbReference type="EMBL" id="CP000481">
    <property type="protein sequence ID" value="ABK52061.1"/>
    <property type="molecule type" value="Genomic_DNA"/>
</dbReference>
<dbReference type="SMR" id="A0LRK1"/>
<dbReference type="FunCoup" id="A0LRK1">
    <property type="interactions" value="61"/>
</dbReference>
<dbReference type="STRING" id="351607.Acel_0287"/>
<dbReference type="KEGG" id="ace:Acel_0287"/>
<dbReference type="eggNOG" id="COG0267">
    <property type="taxonomic scope" value="Bacteria"/>
</dbReference>
<dbReference type="HOGENOM" id="CLU_190949_0_2_11"/>
<dbReference type="InParanoid" id="A0LRK1"/>
<dbReference type="OrthoDB" id="21586at2"/>
<dbReference type="Proteomes" id="UP000008221">
    <property type="component" value="Chromosome"/>
</dbReference>
<dbReference type="GO" id="GO:0005737">
    <property type="term" value="C:cytoplasm"/>
    <property type="evidence" value="ECO:0007669"/>
    <property type="project" value="UniProtKB-ARBA"/>
</dbReference>
<dbReference type="GO" id="GO:1990904">
    <property type="term" value="C:ribonucleoprotein complex"/>
    <property type="evidence" value="ECO:0007669"/>
    <property type="project" value="UniProtKB-KW"/>
</dbReference>
<dbReference type="GO" id="GO:0005840">
    <property type="term" value="C:ribosome"/>
    <property type="evidence" value="ECO:0007669"/>
    <property type="project" value="UniProtKB-KW"/>
</dbReference>
<dbReference type="GO" id="GO:0003735">
    <property type="term" value="F:structural constituent of ribosome"/>
    <property type="evidence" value="ECO:0007669"/>
    <property type="project" value="InterPro"/>
</dbReference>
<dbReference type="GO" id="GO:0006412">
    <property type="term" value="P:translation"/>
    <property type="evidence" value="ECO:0007669"/>
    <property type="project" value="UniProtKB-UniRule"/>
</dbReference>
<dbReference type="Gene3D" id="2.20.28.120">
    <property type="entry name" value="Ribosomal protein L33"/>
    <property type="match status" value="1"/>
</dbReference>
<dbReference type="HAMAP" id="MF_00294">
    <property type="entry name" value="Ribosomal_bL33"/>
    <property type="match status" value="1"/>
</dbReference>
<dbReference type="InterPro" id="IPR001705">
    <property type="entry name" value="Ribosomal_bL33"/>
</dbReference>
<dbReference type="InterPro" id="IPR018264">
    <property type="entry name" value="Ribosomal_bL33_CS"/>
</dbReference>
<dbReference type="InterPro" id="IPR038584">
    <property type="entry name" value="Ribosomal_bL33_sf"/>
</dbReference>
<dbReference type="InterPro" id="IPR011332">
    <property type="entry name" value="Ribosomal_zn-bd"/>
</dbReference>
<dbReference type="NCBIfam" id="NF001764">
    <property type="entry name" value="PRK00504.1"/>
    <property type="match status" value="1"/>
</dbReference>
<dbReference type="NCBIfam" id="NF001860">
    <property type="entry name" value="PRK00595.1"/>
    <property type="match status" value="1"/>
</dbReference>
<dbReference type="NCBIfam" id="TIGR01023">
    <property type="entry name" value="rpmG_bact"/>
    <property type="match status" value="1"/>
</dbReference>
<dbReference type="PANTHER" id="PTHR43168">
    <property type="entry name" value="50S RIBOSOMAL PROTEIN L33, CHLOROPLASTIC"/>
    <property type="match status" value="1"/>
</dbReference>
<dbReference type="PANTHER" id="PTHR43168:SF2">
    <property type="entry name" value="LARGE RIBOSOMAL SUBUNIT PROTEIN BL33C"/>
    <property type="match status" value="1"/>
</dbReference>
<dbReference type="Pfam" id="PF00471">
    <property type="entry name" value="Ribosomal_L33"/>
    <property type="match status" value="1"/>
</dbReference>
<dbReference type="SUPFAM" id="SSF57829">
    <property type="entry name" value="Zn-binding ribosomal proteins"/>
    <property type="match status" value="1"/>
</dbReference>
<dbReference type="PROSITE" id="PS00582">
    <property type="entry name" value="RIBOSOMAL_L33"/>
    <property type="match status" value="1"/>
</dbReference>
<feature type="chain" id="PRO_1000004133" description="Large ribosomal subunit protein bL33">
    <location>
        <begin position="1"/>
        <end position="55"/>
    </location>
</feature>
<gene>
    <name evidence="1" type="primary">rpmG</name>
    <name type="ordered locus">Acel_0287</name>
</gene>
<proteinExistence type="inferred from homology"/>
<organism>
    <name type="scientific">Acidothermus cellulolyticus (strain ATCC 43068 / DSM 8971 / 11B)</name>
    <dbReference type="NCBI Taxonomy" id="351607"/>
    <lineage>
        <taxon>Bacteria</taxon>
        <taxon>Bacillati</taxon>
        <taxon>Actinomycetota</taxon>
        <taxon>Actinomycetes</taxon>
        <taxon>Acidothermales</taxon>
        <taxon>Acidothermaceae</taxon>
        <taxon>Acidothermus</taxon>
    </lineage>
</organism>
<sequence>MAAKTDIRPKITLACQECKHRNYITRKNRRNDPDRLELKKYCPHCNKHQVHRETR</sequence>
<keyword id="KW-1185">Reference proteome</keyword>
<keyword id="KW-0687">Ribonucleoprotein</keyword>
<keyword id="KW-0689">Ribosomal protein</keyword>